<protein>
    <recommendedName>
        <fullName evidence="1">DNA-directed RNA polymerase subunit Rpo12</fullName>
        <ecNumber evidence="1">2.7.7.6</ecNumber>
    </recommendedName>
    <alternativeName>
        <fullName evidence="1">DNA-directed RNA polymerase subunit P</fullName>
    </alternativeName>
</protein>
<organism>
    <name type="scientific">Halobacterium salinarum (strain ATCC 700922 / JCM 11081 / NRC-1)</name>
    <name type="common">Halobacterium halobium</name>
    <dbReference type="NCBI Taxonomy" id="64091"/>
    <lineage>
        <taxon>Archaea</taxon>
        <taxon>Methanobacteriati</taxon>
        <taxon>Methanobacteriota</taxon>
        <taxon>Stenosarchaea group</taxon>
        <taxon>Halobacteria</taxon>
        <taxon>Halobacteriales</taxon>
        <taxon>Halobacteriaceae</taxon>
        <taxon>Halobacterium</taxon>
        <taxon>Halobacterium salinarum NRC-34001</taxon>
    </lineage>
</organism>
<evidence type="ECO:0000255" key="1">
    <source>
        <dbReference type="HAMAP-Rule" id="MF_00615"/>
    </source>
</evidence>
<dbReference type="EC" id="2.7.7.6" evidence="1"/>
<dbReference type="EMBL" id="AE004437">
    <property type="protein sequence ID" value="AAG18837.1"/>
    <property type="molecule type" value="Genomic_DNA"/>
</dbReference>
<dbReference type="PIR" id="A84184">
    <property type="entry name" value="A84184"/>
</dbReference>
<dbReference type="RefSeq" id="WP_010902130.1">
    <property type="nucleotide sequence ID" value="NC_002607.1"/>
</dbReference>
<dbReference type="SMR" id="Q9HSG9"/>
<dbReference type="STRING" id="64091.VNG_0237H"/>
<dbReference type="PaxDb" id="64091-VNG_0237H"/>
<dbReference type="KEGG" id="hal:VNG_0237H"/>
<dbReference type="PATRIC" id="fig|64091.14.peg.171"/>
<dbReference type="HOGENOM" id="CLU_179456_2_1_2"/>
<dbReference type="InParanoid" id="Q9HSG9"/>
<dbReference type="OrthoDB" id="129238at2157"/>
<dbReference type="PhylomeDB" id="Q9HSG9"/>
<dbReference type="Proteomes" id="UP000000554">
    <property type="component" value="Chromosome"/>
</dbReference>
<dbReference type="GO" id="GO:0005737">
    <property type="term" value="C:cytoplasm"/>
    <property type="evidence" value="ECO:0007669"/>
    <property type="project" value="UniProtKB-SubCell"/>
</dbReference>
<dbReference type="GO" id="GO:0000428">
    <property type="term" value="C:DNA-directed RNA polymerase complex"/>
    <property type="evidence" value="ECO:0007669"/>
    <property type="project" value="UniProtKB-KW"/>
</dbReference>
<dbReference type="GO" id="GO:0003677">
    <property type="term" value="F:DNA binding"/>
    <property type="evidence" value="ECO:0007669"/>
    <property type="project" value="InterPro"/>
</dbReference>
<dbReference type="GO" id="GO:0003899">
    <property type="term" value="F:DNA-directed RNA polymerase activity"/>
    <property type="evidence" value="ECO:0007669"/>
    <property type="project" value="UniProtKB-UniRule"/>
</dbReference>
<dbReference type="GO" id="GO:0008270">
    <property type="term" value="F:zinc ion binding"/>
    <property type="evidence" value="ECO:0007669"/>
    <property type="project" value="UniProtKB-UniRule"/>
</dbReference>
<dbReference type="GO" id="GO:0006351">
    <property type="term" value="P:DNA-templated transcription"/>
    <property type="evidence" value="ECO:0007669"/>
    <property type="project" value="UniProtKB-UniRule"/>
</dbReference>
<dbReference type="Gene3D" id="2.20.28.30">
    <property type="entry name" value="RNA polymerase ii, chain L"/>
    <property type="match status" value="1"/>
</dbReference>
<dbReference type="HAMAP" id="MF_00615">
    <property type="entry name" value="RNApol_arch_Rpo12"/>
    <property type="match status" value="1"/>
</dbReference>
<dbReference type="InterPro" id="IPR006591">
    <property type="entry name" value="RNAP_P/RPABC4"/>
</dbReference>
<dbReference type="InterPro" id="IPR029040">
    <property type="entry name" value="RPABC4/Spt4"/>
</dbReference>
<dbReference type="InterPro" id="IPR023464">
    <property type="entry name" value="Rpo12"/>
</dbReference>
<dbReference type="NCBIfam" id="NF001606">
    <property type="entry name" value="PRK00398.1-3"/>
    <property type="match status" value="1"/>
</dbReference>
<dbReference type="Pfam" id="PF03604">
    <property type="entry name" value="Zn_ribbon_RPAB4"/>
    <property type="match status" value="1"/>
</dbReference>
<dbReference type="SMART" id="SM00659">
    <property type="entry name" value="RPOLCX"/>
    <property type="match status" value="1"/>
</dbReference>
<dbReference type="SUPFAM" id="SSF63393">
    <property type="entry name" value="RNA polymerase subunits"/>
    <property type="match status" value="1"/>
</dbReference>
<reference key="1">
    <citation type="journal article" date="2000" name="Proc. Natl. Acad. Sci. U.S.A.">
        <title>Genome sequence of Halobacterium species NRC-1.</title>
        <authorList>
            <person name="Ng W.V."/>
            <person name="Kennedy S.P."/>
            <person name="Mahairas G.G."/>
            <person name="Berquist B."/>
            <person name="Pan M."/>
            <person name="Shukla H.D."/>
            <person name="Lasky S.R."/>
            <person name="Baliga N.S."/>
            <person name="Thorsson V."/>
            <person name="Sbrogna J."/>
            <person name="Swartzell S."/>
            <person name="Weir D."/>
            <person name="Hall J."/>
            <person name="Dahl T.A."/>
            <person name="Welti R."/>
            <person name="Goo Y.A."/>
            <person name="Leithauser B."/>
            <person name="Keller K."/>
            <person name="Cruz R."/>
            <person name="Danson M.J."/>
            <person name="Hough D.W."/>
            <person name="Maddocks D.G."/>
            <person name="Jablonski P.E."/>
            <person name="Krebs M.P."/>
            <person name="Angevine C.M."/>
            <person name="Dale H."/>
            <person name="Isenbarger T.A."/>
            <person name="Peck R.F."/>
            <person name="Pohlschroder M."/>
            <person name="Spudich J.L."/>
            <person name="Jung K.-H."/>
            <person name="Alam M."/>
            <person name="Freitas T."/>
            <person name="Hou S."/>
            <person name="Daniels C.J."/>
            <person name="Dennis P.P."/>
            <person name="Omer A.D."/>
            <person name="Ebhardt H."/>
            <person name="Lowe T.M."/>
            <person name="Liang P."/>
            <person name="Riley M."/>
            <person name="Hood L."/>
            <person name="DasSarma S."/>
        </authorList>
    </citation>
    <scope>NUCLEOTIDE SEQUENCE [LARGE SCALE GENOMIC DNA]</scope>
    <source>
        <strain>ATCC 700922 / JCM 11081 / NRC-1</strain>
    </source>
</reference>
<gene>
    <name evidence="1" type="primary">rpo12</name>
    <name evidence="1" type="synonym">rpoP</name>
    <name type="ordered locus">VNG_0237H</name>
</gene>
<sequence>MSYKCSRCKRDVELDEYGGVRCPYCGHRVLLKERSRDVKEVSVQ</sequence>
<proteinExistence type="inferred from homology"/>
<comment type="function">
    <text evidence="1">DNA-dependent RNA polymerase (RNAP) catalyzes the transcription of DNA into RNA using the four ribonucleoside triphosphates as substrates.</text>
</comment>
<comment type="catalytic activity">
    <reaction evidence="1">
        <text>RNA(n) + a ribonucleoside 5'-triphosphate = RNA(n+1) + diphosphate</text>
        <dbReference type="Rhea" id="RHEA:21248"/>
        <dbReference type="Rhea" id="RHEA-COMP:14527"/>
        <dbReference type="Rhea" id="RHEA-COMP:17342"/>
        <dbReference type="ChEBI" id="CHEBI:33019"/>
        <dbReference type="ChEBI" id="CHEBI:61557"/>
        <dbReference type="ChEBI" id="CHEBI:140395"/>
        <dbReference type="EC" id="2.7.7.6"/>
    </reaction>
</comment>
<comment type="cofactor">
    <cofactor evidence="1">
        <name>Zn(2+)</name>
        <dbReference type="ChEBI" id="CHEBI:29105"/>
    </cofactor>
    <text evidence="1">Binds 1 zinc ion.</text>
</comment>
<comment type="subunit">
    <text evidence="1">Part of the RNA polymerase complex.</text>
</comment>
<comment type="subcellular location">
    <subcellularLocation>
        <location evidence="1">Cytoplasm</location>
    </subcellularLocation>
</comment>
<comment type="similarity">
    <text evidence="1">Belongs to the archaeal Rpo12/eukaryotic RPC10 RNA polymerase subunit family.</text>
</comment>
<accession>Q9HSG9</accession>
<name>RPO12_HALSA</name>
<keyword id="KW-0963">Cytoplasm</keyword>
<keyword id="KW-0240">DNA-directed RNA polymerase</keyword>
<keyword id="KW-0479">Metal-binding</keyword>
<keyword id="KW-0548">Nucleotidyltransferase</keyword>
<keyword id="KW-1185">Reference proteome</keyword>
<keyword id="KW-0804">Transcription</keyword>
<keyword id="KW-0808">Transferase</keyword>
<keyword id="KW-0862">Zinc</keyword>
<feature type="chain" id="PRO_0000159756" description="DNA-directed RNA polymerase subunit Rpo12">
    <location>
        <begin position="1"/>
        <end position="44"/>
    </location>
</feature>
<feature type="binding site" evidence="1">
    <location>
        <position position="8"/>
    </location>
    <ligand>
        <name>Zn(2+)</name>
        <dbReference type="ChEBI" id="CHEBI:29105"/>
    </ligand>
</feature>
<feature type="binding site" evidence="1">
    <location>
        <position position="22"/>
    </location>
    <ligand>
        <name>Zn(2+)</name>
        <dbReference type="ChEBI" id="CHEBI:29105"/>
    </ligand>
</feature>
<feature type="binding site" evidence="1">
    <location>
        <position position="25"/>
    </location>
    <ligand>
        <name>Zn(2+)</name>
        <dbReference type="ChEBI" id="CHEBI:29105"/>
    </ligand>
</feature>